<accession>B3R0X7</accession>
<reference key="1">
    <citation type="journal article" date="2008" name="Genome Res.">
        <title>Genome sequence of the beta-rhizobium Cupriavidus taiwanensis and comparative genomics of rhizobia.</title>
        <authorList>
            <person name="Amadou C."/>
            <person name="Pascal G."/>
            <person name="Mangenot S."/>
            <person name="Glew M."/>
            <person name="Bontemps C."/>
            <person name="Capela D."/>
            <person name="Carrere S."/>
            <person name="Cruveiller S."/>
            <person name="Dossat C."/>
            <person name="Lajus A."/>
            <person name="Marchetti M."/>
            <person name="Poinsot V."/>
            <person name="Rouy Z."/>
            <person name="Servin B."/>
            <person name="Saad M."/>
            <person name="Schenowitz C."/>
            <person name="Barbe V."/>
            <person name="Batut J."/>
            <person name="Medigue C."/>
            <person name="Masson-Boivin C."/>
        </authorList>
    </citation>
    <scope>NUCLEOTIDE SEQUENCE [LARGE SCALE GENOMIC DNA]</scope>
    <source>
        <strain>DSM 17343 / BCRC 17206 / CCUG 44338 / CIP 107171 / LMG 19424 / R1</strain>
    </source>
</reference>
<keyword id="KW-0067">ATP-binding</keyword>
<keyword id="KW-0963">Cytoplasm</keyword>
<keyword id="KW-0418">Kinase</keyword>
<keyword id="KW-0545">Nucleotide biosynthesis</keyword>
<keyword id="KW-0547">Nucleotide-binding</keyword>
<keyword id="KW-0808">Transferase</keyword>
<protein>
    <recommendedName>
        <fullName evidence="1">Adenylate kinase</fullName>
        <shortName evidence="1">AK</shortName>
        <ecNumber evidence="1">2.7.4.3</ecNumber>
    </recommendedName>
    <alternativeName>
        <fullName evidence="1">ATP-AMP transphosphorylase</fullName>
    </alternativeName>
    <alternativeName>
        <fullName evidence="1">ATP:AMP phosphotransferase</fullName>
    </alternativeName>
    <alternativeName>
        <fullName evidence="1">Adenylate monophosphate kinase</fullName>
    </alternativeName>
</protein>
<gene>
    <name evidence="1" type="primary">adk</name>
    <name type="ordered locus">RALTA_A0559</name>
</gene>
<proteinExistence type="inferred from homology"/>
<comment type="function">
    <text evidence="1">Catalyzes the reversible transfer of the terminal phosphate group between ATP and AMP. Plays an important role in cellular energy homeostasis and in adenine nucleotide metabolism.</text>
</comment>
<comment type="catalytic activity">
    <reaction evidence="1">
        <text>AMP + ATP = 2 ADP</text>
        <dbReference type="Rhea" id="RHEA:12973"/>
        <dbReference type="ChEBI" id="CHEBI:30616"/>
        <dbReference type="ChEBI" id="CHEBI:456215"/>
        <dbReference type="ChEBI" id="CHEBI:456216"/>
        <dbReference type="EC" id="2.7.4.3"/>
    </reaction>
</comment>
<comment type="pathway">
    <text evidence="1">Purine metabolism; AMP biosynthesis via salvage pathway; AMP from ADP: step 1/1.</text>
</comment>
<comment type="subunit">
    <text evidence="1">Monomer.</text>
</comment>
<comment type="subcellular location">
    <subcellularLocation>
        <location evidence="1">Cytoplasm</location>
    </subcellularLocation>
</comment>
<comment type="domain">
    <text evidence="1">Consists of three domains, a large central CORE domain and two small peripheral domains, NMPbind and LID, which undergo movements during catalysis. The LID domain closes over the site of phosphoryl transfer upon ATP binding. Assembling and dissambling the active center during each catalytic cycle provides an effective means to prevent ATP hydrolysis.</text>
</comment>
<comment type="similarity">
    <text evidence="1">Belongs to the adenylate kinase family.</text>
</comment>
<organism>
    <name type="scientific">Cupriavidus taiwanensis (strain DSM 17343 / BCRC 17206 / CCUG 44338 / CIP 107171 / LMG 19424 / R1)</name>
    <name type="common">Ralstonia taiwanensis (strain LMG 19424)</name>
    <dbReference type="NCBI Taxonomy" id="977880"/>
    <lineage>
        <taxon>Bacteria</taxon>
        <taxon>Pseudomonadati</taxon>
        <taxon>Pseudomonadota</taxon>
        <taxon>Betaproteobacteria</taxon>
        <taxon>Burkholderiales</taxon>
        <taxon>Burkholderiaceae</taxon>
        <taxon>Cupriavidus</taxon>
    </lineage>
</organism>
<sequence length="221" mass="24138">MRLILLGAPGAGKGTQAKFICEKFGIPQISTGDMLRAAVKAGTPLGVEAKKVMDAGGLVSDDIIIGLVKDRLKQDDCKSGYLFDGFPRTIPQAEAMKDAGVAIDYVLEIDVPFDAIIERMSGRRVHVASGRTYHLKYNPPKTEGVDDETGEPLIQRDDDKEETVKKRLDVYSQQTRPLVDYYSAWAANGDPAAKVAPPKYRKILGVGNVDEITARVFEALK</sequence>
<name>KAD_CUPTR</name>
<dbReference type="EC" id="2.7.4.3" evidence="1"/>
<dbReference type="EMBL" id="CU633749">
    <property type="protein sequence ID" value="CAQ68543.1"/>
    <property type="molecule type" value="Genomic_DNA"/>
</dbReference>
<dbReference type="RefSeq" id="WP_012351884.1">
    <property type="nucleotide sequence ID" value="NC_010528.1"/>
</dbReference>
<dbReference type="SMR" id="B3R0X7"/>
<dbReference type="GeneID" id="29762776"/>
<dbReference type="KEGG" id="cti:RALTA_A0559"/>
<dbReference type="eggNOG" id="COG0563">
    <property type="taxonomic scope" value="Bacteria"/>
</dbReference>
<dbReference type="HOGENOM" id="CLU_032354_1_2_4"/>
<dbReference type="BioCyc" id="CTAI977880:RALTA_RS02735-MONOMER"/>
<dbReference type="UniPathway" id="UPA00588">
    <property type="reaction ID" value="UER00649"/>
</dbReference>
<dbReference type="Proteomes" id="UP000001692">
    <property type="component" value="Chromosome 1"/>
</dbReference>
<dbReference type="GO" id="GO:0005737">
    <property type="term" value="C:cytoplasm"/>
    <property type="evidence" value="ECO:0007669"/>
    <property type="project" value="UniProtKB-SubCell"/>
</dbReference>
<dbReference type="GO" id="GO:0004017">
    <property type="term" value="F:adenylate kinase activity"/>
    <property type="evidence" value="ECO:0007669"/>
    <property type="project" value="UniProtKB-UniRule"/>
</dbReference>
<dbReference type="GO" id="GO:0005524">
    <property type="term" value="F:ATP binding"/>
    <property type="evidence" value="ECO:0007669"/>
    <property type="project" value="UniProtKB-UniRule"/>
</dbReference>
<dbReference type="GO" id="GO:0044209">
    <property type="term" value="P:AMP salvage"/>
    <property type="evidence" value="ECO:0007669"/>
    <property type="project" value="UniProtKB-UniRule"/>
</dbReference>
<dbReference type="CDD" id="cd01428">
    <property type="entry name" value="ADK"/>
    <property type="match status" value="1"/>
</dbReference>
<dbReference type="FunFam" id="3.40.50.300:FF:000106">
    <property type="entry name" value="Adenylate kinase mitochondrial"/>
    <property type="match status" value="1"/>
</dbReference>
<dbReference type="Gene3D" id="3.40.50.300">
    <property type="entry name" value="P-loop containing nucleotide triphosphate hydrolases"/>
    <property type="match status" value="1"/>
</dbReference>
<dbReference type="HAMAP" id="MF_00235">
    <property type="entry name" value="Adenylate_kinase_Adk"/>
    <property type="match status" value="1"/>
</dbReference>
<dbReference type="InterPro" id="IPR006259">
    <property type="entry name" value="Adenyl_kin_sub"/>
</dbReference>
<dbReference type="InterPro" id="IPR000850">
    <property type="entry name" value="Adenylat/UMP-CMP_kin"/>
</dbReference>
<dbReference type="InterPro" id="IPR033690">
    <property type="entry name" value="Adenylat_kinase_CS"/>
</dbReference>
<dbReference type="InterPro" id="IPR007862">
    <property type="entry name" value="Adenylate_kinase_lid-dom"/>
</dbReference>
<dbReference type="InterPro" id="IPR027417">
    <property type="entry name" value="P-loop_NTPase"/>
</dbReference>
<dbReference type="NCBIfam" id="TIGR01351">
    <property type="entry name" value="adk"/>
    <property type="match status" value="1"/>
</dbReference>
<dbReference type="NCBIfam" id="NF001379">
    <property type="entry name" value="PRK00279.1-1"/>
    <property type="match status" value="1"/>
</dbReference>
<dbReference type="NCBIfam" id="NF001380">
    <property type="entry name" value="PRK00279.1-2"/>
    <property type="match status" value="1"/>
</dbReference>
<dbReference type="NCBIfam" id="NF001381">
    <property type="entry name" value="PRK00279.1-3"/>
    <property type="match status" value="1"/>
</dbReference>
<dbReference type="NCBIfam" id="NF011100">
    <property type="entry name" value="PRK14527.1"/>
    <property type="match status" value="1"/>
</dbReference>
<dbReference type="PANTHER" id="PTHR23359">
    <property type="entry name" value="NUCLEOTIDE KINASE"/>
    <property type="match status" value="1"/>
</dbReference>
<dbReference type="Pfam" id="PF00406">
    <property type="entry name" value="ADK"/>
    <property type="match status" value="1"/>
</dbReference>
<dbReference type="Pfam" id="PF05191">
    <property type="entry name" value="ADK_lid"/>
    <property type="match status" value="1"/>
</dbReference>
<dbReference type="PRINTS" id="PR00094">
    <property type="entry name" value="ADENYLTKNASE"/>
</dbReference>
<dbReference type="SUPFAM" id="SSF52540">
    <property type="entry name" value="P-loop containing nucleoside triphosphate hydrolases"/>
    <property type="match status" value="1"/>
</dbReference>
<dbReference type="PROSITE" id="PS00113">
    <property type="entry name" value="ADENYLATE_KINASE"/>
    <property type="match status" value="1"/>
</dbReference>
<evidence type="ECO:0000255" key="1">
    <source>
        <dbReference type="HAMAP-Rule" id="MF_00235"/>
    </source>
</evidence>
<evidence type="ECO:0000256" key="2">
    <source>
        <dbReference type="SAM" id="MobiDB-lite"/>
    </source>
</evidence>
<feature type="chain" id="PRO_1000100555" description="Adenylate kinase">
    <location>
        <begin position="1"/>
        <end position="221"/>
    </location>
</feature>
<feature type="region of interest" description="NMP" evidence="1">
    <location>
        <begin position="30"/>
        <end position="59"/>
    </location>
</feature>
<feature type="region of interest" description="LID" evidence="1">
    <location>
        <begin position="122"/>
        <end position="159"/>
    </location>
</feature>
<feature type="region of interest" description="Disordered" evidence="2">
    <location>
        <begin position="138"/>
        <end position="159"/>
    </location>
</feature>
<feature type="binding site" evidence="1">
    <location>
        <begin position="10"/>
        <end position="15"/>
    </location>
    <ligand>
        <name>ATP</name>
        <dbReference type="ChEBI" id="CHEBI:30616"/>
    </ligand>
</feature>
<feature type="binding site" evidence="1">
    <location>
        <position position="31"/>
    </location>
    <ligand>
        <name>AMP</name>
        <dbReference type="ChEBI" id="CHEBI:456215"/>
    </ligand>
</feature>
<feature type="binding site" evidence="1">
    <location>
        <position position="36"/>
    </location>
    <ligand>
        <name>AMP</name>
        <dbReference type="ChEBI" id="CHEBI:456215"/>
    </ligand>
</feature>
<feature type="binding site" evidence="1">
    <location>
        <begin position="57"/>
        <end position="59"/>
    </location>
    <ligand>
        <name>AMP</name>
        <dbReference type="ChEBI" id="CHEBI:456215"/>
    </ligand>
</feature>
<feature type="binding site" evidence="1">
    <location>
        <begin position="85"/>
        <end position="88"/>
    </location>
    <ligand>
        <name>AMP</name>
        <dbReference type="ChEBI" id="CHEBI:456215"/>
    </ligand>
</feature>
<feature type="binding site" evidence="1">
    <location>
        <position position="92"/>
    </location>
    <ligand>
        <name>AMP</name>
        <dbReference type="ChEBI" id="CHEBI:456215"/>
    </ligand>
</feature>
<feature type="binding site" evidence="1">
    <location>
        <position position="123"/>
    </location>
    <ligand>
        <name>ATP</name>
        <dbReference type="ChEBI" id="CHEBI:30616"/>
    </ligand>
</feature>
<feature type="binding site" evidence="1">
    <location>
        <begin position="132"/>
        <end position="133"/>
    </location>
    <ligand>
        <name>ATP</name>
        <dbReference type="ChEBI" id="CHEBI:30616"/>
    </ligand>
</feature>
<feature type="binding site" evidence="1">
    <location>
        <position position="156"/>
    </location>
    <ligand>
        <name>AMP</name>
        <dbReference type="ChEBI" id="CHEBI:456215"/>
    </ligand>
</feature>
<feature type="binding site" evidence="1">
    <location>
        <position position="167"/>
    </location>
    <ligand>
        <name>AMP</name>
        <dbReference type="ChEBI" id="CHEBI:456215"/>
    </ligand>
</feature>
<feature type="binding site" evidence="1">
    <location>
        <position position="207"/>
    </location>
    <ligand>
        <name>ATP</name>
        <dbReference type="ChEBI" id="CHEBI:30616"/>
    </ligand>
</feature>